<organism>
    <name type="scientific">Herpetosiphon aurantiacus (strain ATCC 23779 / DSM 785 / 114-95)</name>
    <dbReference type="NCBI Taxonomy" id="316274"/>
    <lineage>
        <taxon>Bacteria</taxon>
        <taxon>Bacillati</taxon>
        <taxon>Chloroflexota</taxon>
        <taxon>Chloroflexia</taxon>
        <taxon>Herpetosiphonales</taxon>
        <taxon>Herpetosiphonaceae</taxon>
        <taxon>Herpetosiphon</taxon>
    </lineage>
</organism>
<sequence>MTVYNFNAGPAILPPSVLSQAQEELRDFAGTGISVMETSHRAKEFEAVNNEVEARFKALLGIESGYRVLLLQGGASTQFAMIPMNFLGADQVADYIITGTWAEKARDEAQKIGKVHIAATTEAENHNRIPSQTELQFSENPVYVHLTTNNTIYGTQWQSTPETNGVPIVADMSSDIFSRPFDASKFGLVYAGAQKNLGPSGVTVVLIREDWLDKGAKNVPTMLRYSTHAKNNSLYNTPPTFGVYMLNLVLAWIQEQGGLAGMAEYNTRKANVVYNAIDNSGGFYRGHAVADSRSQMNVTFNLPTQELEKQFLAEAKAQGMIGLPGHRSVGGVRASIYNAMSIEGVEALASFMAHFAAKQG</sequence>
<evidence type="ECO:0000255" key="1">
    <source>
        <dbReference type="HAMAP-Rule" id="MF_00160"/>
    </source>
</evidence>
<name>SERC_HERA2</name>
<comment type="function">
    <text evidence="1">Catalyzes the reversible conversion of 3-phosphohydroxypyruvate to phosphoserine and of 3-hydroxy-2-oxo-4-phosphonooxybutanoate to phosphohydroxythreonine.</text>
</comment>
<comment type="catalytic activity">
    <reaction evidence="1">
        <text>O-phospho-L-serine + 2-oxoglutarate = 3-phosphooxypyruvate + L-glutamate</text>
        <dbReference type="Rhea" id="RHEA:14329"/>
        <dbReference type="ChEBI" id="CHEBI:16810"/>
        <dbReference type="ChEBI" id="CHEBI:18110"/>
        <dbReference type="ChEBI" id="CHEBI:29985"/>
        <dbReference type="ChEBI" id="CHEBI:57524"/>
        <dbReference type="EC" id="2.6.1.52"/>
    </reaction>
</comment>
<comment type="catalytic activity">
    <reaction evidence="1">
        <text>4-(phosphooxy)-L-threonine + 2-oxoglutarate = (R)-3-hydroxy-2-oxo-4-phosphooxybutanoate + L-glutamate</text>
        <dbReference type="Rhea" id="RHEA:16573"/>
        <dbReference type="ChEBI" id="CHEBI:16810"/>
        <dbReference type="ChEBI" id="CHEBI:29985"/>
        <dbReference type="ChEBI" id="CHEBI:58452"/>
        <dbReference type="ChEBI" id="CHEBI:58538"/>
        <dbReference type="EC" id="2.6.1.52"/>
    </reaction>
</comment>
<comment type="cofactor">
    <cofactor evidence="1">
        <name>pyridoxal 5'-phosphate</name>
        <dbReference type="ChEBI" id="CHEBI:597326"/>
    </cofactor>
    <text evidence="1">Binds 1 pyridoxal phosphate per subunit.</text>
</comment>
<comment type="pathway">
    <text evidence="1">Amino-acid biosynthesis; L-serine biosynthesis; L-serine from 3-phospho-D-glycerate: step 2/3.</text>
</comment>
<comment type="pathway">
    <text evidence="1">Cofactor biosynthesis; pyridoxine 5'-phosphate biosynthesis; pyridoxine 5'-phosphate from D-erythrose 4-phosphate: step 3/5.</text>
</comment>
<comment type="subunit">
    <text evidence="1">Homodimer.</text>
</comment>
<comment type="subcellular location">
    <subcellularLocation>
        <location evidence="1">Cytoplasm</location>
    </subcellularLocation>
</comment>
<comment type="similarity">
    <text evidence="1">Belongs to the class-V pyridoxal-phosphate-dependent aminotransferase family. SerC subfamily.</text>
</comment>
<proteinExistence type="inferred from homology"/>
<keyword id="KW-0028">Amino-acid biosynthesis</keyword>
<keyword id="KW-0032">Aminotransferase</keyword>
<keyword id="KW-0963">Cytoplasm</keyword>
<keyword id="KW-0663">Pyridoxal phosphate</keyword>
<keyword id="KW-0664">Pyridoxine biosynthesis</keyword>
<keyword id="KW-0718">Serine biosynthesis</keyword>
<keyword id="KW-0808">Transferase</keyword>
<gene>
    <name evidence="1" type="primary">serC</name>
    <name type="ordered locus">Haur_1719</name>
</gene>
<protein>
    <recommendedName>
        <fullName evidence="1">Phosphoserine aminotransferase</fullName>
        <ecNumber evidence="1">2.6.1.52</ecNumber>
    </recommendedName>
    <alternativeName>
        <fullName evidence="1">Phosphohydroxythreonine aminotransferase</fullName>
        <shortName evidence="1">PSAT</shortName>
    </alternativeName>
</protein>
<accession>A9B6Q3</accession>
<reference key="1">
    <citation type="journal article" date="2011" name="Stand. Genomic Sci.">
        <title>Complete genome sequence of the filamentous gliding predatory bacterium Herpetosiphon aurantiacus type strain (114-95(T)).</title>
        <authorList>
            <person name="Kiss H."/>
            <person name="Nett M."/>
            <person name="Domin N."/>
            <person name="Martin K."/>
            <person name="Maresca J.A."/>
            <person name="Copeland A."/>
            <person name="Lapidus A."/>
            <person name="Lucas S."/>
            <person name="Berry K.W."/>
            <person name="Glavina Del Rio T."/>
            <person name="Dalin E."/>
            <person name="Tice H."/>
            <person name="Pitluck S."/>
            <person name="Richardson P."/>
            <person name="Bruce D."/>
            <person name="Goodwin L."/>
            <person name="Han C."/>
            <person name="Detter J.C."/>
            <person name="Schmutz J."/>
            <person name="Brettin T."/>
            <person name="Land M."/>
            <person name="Hauser L."/>
            <person name="Kyrpides N.C."/>
            <person name="Ivanova N."/>
            <person name="Goeker M."/>
            <person name="Woyke T."/>
            <person name="Klenk H.P."/>
            <person name="Bryant D.A."/>
        </authorList>
    </citation>
    <scope>NUCLEOTIDE SEQUENCE [LARGE SCALE GENOMIC DNA]</scope>
    <source>
        <strain>ATCC 23779 / DSM 785 / 114-95</strain>
    </source>
</reference>
<dbReference type="EC" id="2.6.1.52" evidence="1"/>
<dbReference type="EMBL" id="CP000875">
    <property type="protein sequence ID" value="ABX04362.1"/>
    <property type="molecule type" value="Genomic_DNA"/>
</dbReference>
<dbReference type="SMR" id="A9B6Q3"/>
<dbReference type="FunCoup" id="A9B6Q3">
    <property type="interactions" value="424"/>
</dbReference>
<dbReference type="STRING" id="316274.Haur_1719"/>
<dbReference type="KEGG" id="hau:Haur_1719"/>
<dbReference type="eggNOG" id="COG1932">
    <property type="taxonomic scope" value="Bacteria"/>
</dbReference>
<dbReference type="HOGENOM" id="CLU_034866_0_2_0"/>
<dbReference type="InParanoid" id="A9B6Q3"/>
<dbReference type="UniPathway" id="UPA00135">
    <property type="reaction ID" value="UER00197"/>
</dbReference>
<dbReference type="UniPathway" id="UPA00244">
    <property type="reaction ID" value="UER00311"/>
</dbReference>
<dbReference type="Proteomes" id="UP000000787">
    <property type="component" value="Chromosome"/>
</dbReference>
<dbReference type="GO" id="GO:0005737">
    <property type="term" value="C:cytoplasm"/>
    <property type="evidence" value="ECO:0007669"/>
    <property type="project" value="UniProtKB-SubCell"/>
</dbReference>
<dbReference type="GO" id="GO:0004648">
    <property type="term" value="F:O-phospho-L-serine:2-oxoglutarate aminotransferase activity"/>
    <property type="evidence" value="ECO:0007669"/>
    <property type="project" value="UniProtKB-UniRule"/>
</dbReference>
<dbReference type="GO" id="GO:0030170">
    <property type="term" value="F:pyridoxal phosphate binding"/>
    <property type="evidence" value="ECO:0007669"/>
    <property type="project" value="UniProtKB-UniRule"/>
</dbReference>
<dbReference type="GO" id="GO:0006564">
    <property type="term" value="P:L-serine biosynthetic process"/>
    <property type="evidence" value="ECO:0007669"/>
    <property type="project" value="UniProtKB-UniRule"/>
</dbReference>
<dbReference type="GO" id="GO:0008615">
    <property type="term" value="P:pyridoxine biosynthetic process"/>
    <property type="evidence" value="ECO:0007669"/>
    <property type="project" value="UniProtKB-UniRule"/>
</dbReference>
<dbReference type="CDD" id="cd00611">
    <property type="entry name" value="PSAT_like"/>
    <property type="match status" value="1"/>
</dbReference>
<dbReference type="FunFam" id="3.40.640.10:FF:000010">
    <property type="entry name" value="Phosphoserine aminotransferase"/>
    <property type="match status" value="1"/>
</dbReference>
<dbReference type="FunFam" id="3.90.1150.10:FF:000006">
    <property type="entry name" value="Phosphoserine aminotransferase"/>
    <property type="match status" value="1"/>
</dbReference>
<dbReference type="Gene3D" id="3.90.1150.10">
    <property type="entry name" value="Aspartate Aminotransferase, domain 1"/>
    <property type="match status" value="1"/>
</dbReference>
<dbReference type="Gene3D" id="3.40.640.10">
    <property type="entry name" value="Type I PLP-dependent aspartate aminotransferase-like (Major domain)"/>
    <property type="match status" value="1"/>
</dbReference>
<dbReference type="HAMAP" id="MF_00160">
    <property type="entry name" value="SerC_aminotrans_5"/>
    <property type="match status" value="1"/>
</dbReference>
<dbReference type="InterPro" id="IPR000192">
    <property type="entry name" value="Aminotrans_V_dom"/>
</dbReference>
<dbReference type="InterPro" id="IPR020578">
    <property type="entry name" value="Aminotrans_V_PyrdxlP_BS"/>
</dbReference>
<dbReference type="InterPro" id="IPR022278">
    <property type="entry name" value="Pser_aminoTfrase"/>
</dbReference>
<dbReference type="InterPro" id="IPR015424">
    <property type="entry name" value="PyrdxlP-dep_Trfase"/>
</dbReference>
<dbReference type="InterPro" id="IPR015421">
    <property type="entry name" value="PyrdxlP-dep_Trfase_major"/>
</dbReference>
<dbReference type="InterPro" id="IPR015422">
    <property type="entry name" value="PyrdxlP-dep_Trfase_small"/>
</dbReference>
<dbReference type="NCBIfam" id="NF003764">
    <property type="entry name" value="PRK05355.1"/>
    <property type="match status" value="1"/>
</dbReference>
<dbReference type="NCBIfam" id="TIGR01364">
    <property type="entry name" value="serC_1"/>
    <property type="match status" value="1"/>
</dbReference>
<dbReference type="PANTHER" id="PTHR43247">
    <property type="entry name" value="PHOSPHOSERINE AMINOTRANSFERASE"/>
    <property type="match status" value="1"/>
</dbReference>
<dbReference type="PANTHER" id="PTHR43247:SF1">
    <property type="entry name" value="PHOSPHOSERINE AMINOTRANSFERASE"/>
    <property type="match status" value="1"/>
</dbReference>
<dbReference type="Pfam" id="PF00266">
    <property type="entry name" value="Aminotran_5"/>
    <property type="match status" value="1"/>
</dbReference>
<dbReference type="PIRSF" id="PIRSF000525">
    <property type="entry name" value="SerC"/>
    <property type="match status" value="1"/>
</dbReference>
<dbReference type="SUPFAM" id="SSF53383">
    <property type="entry name" value="PLP-dependent transferases"/>
    <property type="match status" value="1"/>
</dbReference>
<dbReference type="PROSITE" id="PS00595">
    <property type="entry name" value="AA_TRANSFER_CLASS_5"/>
    <property type="match status" value="1"/>
</dbReference>
<feature type="chain" id="PRO_1000097214" description="Phosphoserine aminotransferase">
    <location>
        <begin position="1"/>
        <end position="360"/>
    </location>
</feature>
<feature type="binding site" evidence="1">
    <location>
        <position position="41"/>
    </location>
    <ligand>
        <name>L-glutamate</name>
        <dbReference type="ChEBI" id="CHEBI:29985"/>
    </ligand>
</feature>
<feature type="binding site" evidence="1">
    <location>
        <begin position="75"/>
        <end position="76"/>
    </location>
    <ligand>
        <name>pyridoxal 5'-phosphate</name>
        <dbReference type="ChEBI" id="CHEBI:597326"/>
    </ligand>
</feature>
<feature type="binding site" evidence="1">
    <location>
        <position position="101"/>
    </location>
    <ligand>
        <name>pyridoxal 5'-phosphate</name>
        <dbReference type="ChEBI" id="CHEBI:597326"/>
    </ligand>
</feature>
<feature type="binding site" evidence="1">
    <location>
        <position position="151"/>
    </location>
    <ligand>
        <name>pyridoxal 5'-phosphate</name>
        <dbReference type="ChEBI" id="CHEBI:597326"/>
    </ligand>
</feature>
<feature type="binding site" evidence="1">
    <location>
        <position position="171"/>
    </location>
    <ligand>
        <name>pyridoxal 5'-phosphate</name>
        <dbReference type="ChEBI" id="CHEBI:597326"/>
    </ligand>
</feature>
<feature type="binding site" evidence="1">
    <location>
        <position position="194"/>
    </location>
    <ligand>
        <name>pyridoxal 5'-phosphate</name>
        <dbReference type="ChEBI" id="CHEBI:597326"/>
    </ligand>
</feature>
<feature type="binding site" evidence="1">
    <location>
        <begin position="236"/>
        <end position="237"/>
    </location>
    <ligand>
        <name>pyridoxal 5'-phosphate</name>
        <dbReference type="ChEBI" id="CHEBI:597326"/>
    </ligand>
</feature>
<feature type="modified residue" description="N6-(pyridoxal phosphate)lysine" evidence="1">
    <location>
        <position position="195"/>
    </location>
</feature>